<name>DAPB_NITEC</name>
<keyword id="KW-0028">Amino-acid biosynthesis</keyword>
<keyword id="KW-0963">Cytoplasm</keyword>
<keyword id="KW-0220">Diaminopimelate biosynthesis</keyword>
<keyword id="KW-0457">Lysine biosynthesis</keyword>
<keyword id="KW-0520">NAD</keyword>
<keyword id="KW-0521">NADP</keyword>
<keyword id="KW-0560">Oxidoreductase</keyword>
<feature type="chain" id="PRO_1000008606" description="4-hydroxy-tetrahydrodipicolinate reductase">
    <location>
        <begin position="1"/>
        <end position="268"/>
    </location>
</feature>
<feature type="active site" description="Proton donor/acceptor" evidence="1">
    <location>
        <position position="156"/>
    </location>
</feature>
<feature type="active site" description="Proton donor" evidence="1">
    <location>
        <position position="160"/>
    </location>
</feature>
<feature type="binding site" evidence="1">
    <location>
        <begin position="10"/>
        <end position="15"/>
    </location>
    <ligand>
        <name>NAD(+)</name>
        <dbReference type="ChEBI" id="CHEBI:57540"/>
    </ligand>
</feature>
<feature type="binding site" evidence="1">
    <location>
        <position position="36"/>
    </location>
    <ligand>
        <name>NAD(+)</name>
        <dbReference type="ChEBI" id="CHEBI:57540"/>
    </ligand>
</feature>
<feature type="binding site" evidence="1">
    <location>
        <begin position="99"/>
        <end position="101"/>
    </location>
    <ligand>
        <name>NAD(+)</name>
        <dbReference type="ChEBI" id="CHEBI:57540"/>
    </ligand>
</feature>
<feature type="binding site" evidence="1">
    <location>
        <begin position="123"/>
        <end position="126"/>
    </location>
    <ligand>
        <name>NAD(+)</name>
        <dbReference type="ChEBI" id="CHEBI:57540"/>
    </ligand>
</feature>
<feature type="binding site" evidence="1">
    <location>
        <position position="157"/>
    </location>
    <ligand>
        <name>(S)-2,3,4,5-tetrahydrodipicolinate</name>
        <dbReference type="ChEBI" id="CHEBI:16845"/>
    </ligand>
</feature>
<feature type="binding site" evidence="1">
    <location>
        <begin position="166"/>
        <end position="167"/>
    </location>
    <ligand>
        <name>(S)-2,3,4,5-tetrahydrodipicolinate</name>
        <dbReference type="ChEBI" id="CHEBI:16845"/>
    </ligand>
</feature>
<evidence type="ECO:0000255" key="1">
    <source>
        <dbReference type="HAMAP-Rule" id="MF_00102"/>
    </source>
</evidence>
<evidence type="ECO:0000305" key="2"/>
<comment type="function">
    <text evidence="1">Catalyzes the conversion of 4-hydroxy-tetrahydrodipicolinate (HTPA) to tetrahydrodipicolinate.</text>
</comment>
<comment type="catalytic activity">
    <reaction evidence="1">
        <text>(S)-2,3,4,5-tetrahydrodipicolinate + NAD(+) + H2O = (2S,4S)-4-hydroxy-2,3,4,5-tetrahydrodipicolinate + NADH + H(+)</text>
        <dbReference type="Rhea" id="RHEA:35323"/>
        <dbReference type="ChEBI" id="CHEBI:15377"/>
        <dbReference type="ChEBI" id="CHEBI:15378"/>
        <dbReference type="ChEBI" id="CHEBI:16845"/>
        <dbReference type="ChEBI" id="CHEBI:57540"/>
        <dbReference type="ChEBI" id="CHEBI:57945"/>
        <dbReference type="ChEBI" id="CHEBI:67139"/>
        <dbReference type="EC" id="1.17.1.8"/>
    </reaction>
</comment>
<comment type="catalytic activity">
    <reaction evidence="1">
        <text>(S)-2,3,4,5-tetrahydrodipicolinate + NADP(+) + H2O = (2S,4S)-4-hydroxy-2,3,4,5-tetrahydrodipicolinate + NADPH + H(+)</text>
        <dbReference type="Rhea" id="RHEA:35331"/>
        <dbReference type="ChEBI" id="CHEBI:15377"/>
        <dbReference type="ChEBI" id="CHEBI:15378"/>
        <dbReference type="ChEBI" id="CHEBI:16845"/>
        <dbReference type="ChEBI" id="CHEBI:57783"/>
        <dbReference type="ChEBI" id="CHEBI:58349"/>
        <dbReference type="ChEBI" id="CHEBI:67139"/>
        <dbReference type="EC" id="1.17.1.8"/>
    </reaction>
</comment>
<comment type="pathway">
    <text evidence="1">Amino-acid biosynthesis; L-lysine biosynthesis via DAP pathway; (S)-tetrahydrodipicolinate from L-aspartate: step 4/4.</text>
</comment>
<comment type="subcellular location">
    <subcellularLocation>
        <location evidence="1">Cytoplasm</location>
    </subcellularLocation>
</comment>
<comment type="similarity">
    <text evidence="1">Belongs to the DapB family.</text>
</comment>
<comment type="caution">
    <text evidence="2">Was originally thought to be a dihydrodipicolinate reductase (DHDPR), catalyzing the conversion of dihydrodipicolinate to tetrahydrodipicolinate. However, it was shown in E.coli that the substrate of the enzymatic reaction is not dihydrodipicolinate (DHDP) but in fact (2S,4S)-4-hydroxy-2,3,4,5-tetrahydrodipicolinic acid (HTPA), the product released by the DapA-catalyzed reaction.</text>
</comment>
<accession>Q0AER1</accession>
<organism>
    <name type="scientific">Nitrosomonas eutropha (strain DSM 101675 / C91 / Nm57)</name>
    <dbReference type="NCBI Taxonomy" id="335283"/>
    <lineage>
        <taxon>Bacteria</taxon>
        <taxon>Pseudomonadati</taxon>
        <taxon>Pseudomonadota</taxon>
        <taxon>Betaproteobacteria</taxon>
        <taxon>Nitrosomonadales</taxon>
        <taxon>Nitrosomonadaceae</taxon>
        <taxon>Nitrosomonas</taxon>
    </lineage>
</organism>
<proteinExistence type="inferred from homology"/>
<gene>
    <name evidence="1" type="primary">dapB</name>
    <name type="ordered locus">Neut_1940</name>
</gene>
<dbReference type="EC" id="1.17.1.8" evidence="1"/>
<dbReference type="EMBL" id="CP000450">
    <property type="protein sequence ID" value="ABI60171.1"/>
    <property type="molecule type" value="Genomic_DNA"/>
</dbReference>
<dbReference type="RefSeq" id="WP_011634972.1">
    <property type="nucleotide sequence ID" value="NC_008344.1"/>
</dbReference>
<dbReference type="SMR" id="Q0AER1"/>
<dbReference type="STRING" id="335283.Neut_1940"/>
<dbReference type="KEGG" id="net:Neut_1940"/>
<dbReference type="eggNOG" id="COG0289">
    <property type="taxonomic scope" value="Bacteria"/>
</dbReference>
<dbReference type="HOGENOM" id="CLU_047479_2_1_4"/>
<dbReference type="OrthoDB" id="9790352at2"/>
<dbReference type="UniPathway" id="UPA00034">
    <property type="reaction ID" value="UER00018"/>
</dbReference>
<dbReference type="Proteomes" id="UP000001966">
    <property type="component" value="Chromosome"/>
</dbReference>
<dbReference type="GO" id="GO:0005829">
    <property type="term" value="C:cytosol"/>
    <property type="evidence" value="ECO:0007669"/>
    <property type="project" value="TreeGrafter"/>
</dbReference>
<dbReference type="GO" id="GO:0008839">
    <property type="term" value="F:4-hydroxy-tetrahydrodipicolinate reductase"/>
    <property type="evidence" value="ECO:0007669"/>
    <property type="project" value="UniProtKB-EC"/>
</dbReference>
<dbReference type="GO" id="GO:0051287">
    <property type="term" value="F:NAD binding"/>
    <property type="evidence" value="ECO:0007669"/>
    <property type="project" value="UniProtKB-UniRule"/>
</dbReference>
<dbReference type="GO" id="GO:0050661">
    <property type="term" value="F:NADP binding"/>
    <property type="evidence" value="ECO:0007669"/>
    <property type="project" value="UniProtKB-UniRule"/>
</dbReference>
<dbReference type="GO" id="GO:0016726">
    <property type="term" value="F:oxidoreductase activity, acting on CH or CH2 groups, NAD or NADP as acceptor"/>
    <property type="evidence" value="ECO:0007669"/>
    <property type="project" value="UniProtKB-UniRule"/>
</dbReference>
<dbReference type="GO" id="GO:0019877">
    <property type="term" value="P:diaminopimelate biosynthetic process"/>
    <property type="evidence" value="ECO:0007669"/>
    <property type="project" value="UniProtKB-UniRule"/>
</dbReference>
<dbReference type="GO" id="GO:0009089">
    <property type="term" value="P:lysine biosynthetic process via diaminopimelate"/>
    <property type="evidence" value="ECO:0007669"/>
    <property type="project" value="UniProtKB-UniRule"/>
</dbReference>
<dbReference type="CDD" id="cd02274">
    <property type="entry name" value="DHDPR_N"/>
    <property type="match status" value="1"/>
</dbReference>
<dbReference type="FunFam" id="3.30.360.10:FF:000004">
    <property type="entry name" value="4-hydroxy-tetrahydrodipicolinate reductase"/>
    <property type="match status" value="1"/>
</dbReference>
<dbReference type="FunFam" id="3.40.50.720:FF:000048">
    <property type="entry name" value="4-hydroxy-tetrahydrodipicolinate reductase"/>
    <property type="match status" value="1"/>
</dbReference>
<dbReference type="Gene3D" id="3.30.360.10">
    <property type="entry name" value="Dihydrodipicolinate Reductase, domain 2"/>
    <property type="match status" value="1"/>
</dbReference>
<dbReference type="Gene3D" id="3.40.50.720">
    <property type="entry name" value="NAD(P)-binding Rossmann-like Domain"/>
    <property type="match status" value="1"/>
</dbReference>
<dbReference type="HAMAP" id="MF_00102">
    <property type="entry name" value="DapB"/>
    <property type="match status" value="1"/>
</dbReference>
<dbReference type="InterPro" id="IPR022663">
    <property type="entry name" value="DapB_C"/>
</dbReference>
<dbReference type="InterPro" id="IPR000846">
    <property type="entry name" value="DapB_N"/>
</dbReference>
<dbReference type="InterPro" id="IPR022664">
    <property type="entry name" value="DapB_N_CS"/>
</dbReference>
<dbReference type="InterPro" id="IPR023940">
    <property type="entry name" value="DHDPR_bac"/>
</dbReference>
<dbReference type="InterPro" id="IPR036291">
    <property type="entry name" value="NAD(P)-bd_dom_sf"/>
</dbReference>
<dbReference type="NCBIfam" id="TIGR00036">
    <property type="entry name" value="dapB"/>
    <property type="match status" value="1"/>
</dbReference>
<dbReference type="PANTHER" id="PTHR20836:SF0">
    <property type="entry name" value="4-HYDROXY-TETRAHYDRODIPICOLINATE REDUCTASE 1, CHLOROPLASTIC-RELATED"/>
    <property type="match status" value="1"/>
</dbReference>
<dbReference type="PANTHER" id="PTHR20836">
    <property type="entry name" value="DIHYDRODIPICOLINATE REDUCTASE"/>
    <property type="match status" value="1"/>
</dbReference>
<dbReference type="Pfam" id="PF05173">
    <property type="entry name" value="DapB_C"/>
    <property type="match status" value="1"/>
</dbReference>
<dbReference type="Pfam" id="PF01113">
    <property type="entry name" value="DapB_N"/>
    <property type="match status" value="1"/>
</dbReference>
<dbReference type="PIRSF" id="PIRSF000161">
    <property type="entry name" value="DHPR"/>
    <property type="match status" value="1"/>
</dbReference>
<dbReference type="SUPFAM" id="SSF55347">
    <property type="entry name" value="Glyceraldehyde-3-phosphate dehydrogenase-like, C-terminal domain"/>
    <property type="match status" value="1"/>
</dbReference>
<dbReference type="SUPFAM" id="SSF51735">
    <property type="entry name" value="NAD(P)-binding Rossmann-fold domains"/>
    <property type="match status" value="1"/>
</dbReference>
<dbReference type="PROSITE" id="PS01298">
    <property type="entry name" value="DAPB"/>
    <property type="match status" value="1"/>
</dbReference>
<reference key="1">
    <citation type="journal article" date="2007" name="Environ. Microbiol.">
        <title>Whole-genome analysis of the ammonia-oxidizing bacterium, Nitrosomonas eutropha C91: implications for niche adaptation.</title>
        <authorList>
            <person name="Stein L.Y."/>
            <person name="Arp D.J."/>
            <person name="Berube P.M."/>
            <person name="Chain P.S."/>
            <person name="Hauser L."/>
            <person name="Jetten M.S."/>
            <person name="Klotz M.G."/>
            <person name="Larimer F.W."/>
            <person name="Norton J.M."/>
            <person name="Op den Camp H.J.M."/>
            <person name="Shin M."/>
            <person name="Wei X."/>
        </authorList>
    </citation>
    <scope>NUCLEOTIDE SEQUENCE [LARGE SCALE GENOMIC DNA]</scope>
    <source>
        <strain>DSM 101675 / C91 / Nm57</strain>
    </source>
</reference>
<protein>
    <recommendedName>
        <fullName evidence="1">4-hydroxy-tetrahydrodipicolinate reductase</fullName>
        <shortName evidence="1">HTPA reductase</shortName>
        <ecNumber evidence="1">1.17.1.8</ecNumber>
    </recommendedName>
</protein>
<sequence>MTLLNIAVAGSTGRMGRTIMETIADAQDLRLSAALEQPDSPYLSQDAGGLTGTPCGVIINSDYASALTGSDVLIDFTRPAGTLTHLAVCRQSGIHMVIGTTGFSAEEKEIIHDAAKDIAIVFAPNMSVGVNILFRLLEVAAKALPAGYDVEIIEAHHRHKVDAPSGTALRMGEVIAQTQGKNLEKVAIYGREGHTGERAADTIGFSTIRGGDIVGDHTALFAGIGERLEITHKASSRKTFATGALHAARFLATKKSGLFDMQDVLGLR</sequence>